<organism>
    <name type="scientific">Xylella fastidiosa (strain M23)</name>
    <dbReference type="NCBI Taxonomy" id="405441"/>
    <lineage>
        <taxon>Bacteria</taxon>
        <taxon>Pseudomonadati</taxon>
        <taxon>Pseudomonadota</taxon>
        <taxon>Gammaproteobacteria</taxon>
        <taxon>Lysobacterales</taxon>
        <taxon>Lysobacteraceae</taxon>
        <taxon>Xylella</taxon>
    </lineage>
</organism>
<accession>B2I583</accession>
<name>UBIB_XYLF2</name>
<reference key="1">
    <citation type="journal article" date="2010" name="J. Bacteriol.">
        <title>Whole genome sequences of two Xylella fastidiosa strains (M12 and M23) causing almond leaf scorch disease in California.</title>
        <authorList>
            <person name="Chen J."/>
            <person name="Xie G."/>
            <person name="Han S."/>
            <person name="Chertkov O."/>
            <person name="Sims D."/>
            <person name="Civerolo E.L."/>
        </authorList>
    </citation>
    <scope>NUCLEOTIDE SEQUENCE [LARGE SCALE GENOMIC DNA]</scope>
    <source>
        <strain>M23</strain>
    </source>
</reference>
<dbReference type="EC" id="2.7.-.-" evidence="1"/>
<dbReference type="EMBL" id="CP001011">
    <property type="protein sequence ID" value="ACB92526.1"/>
    <property type="molecule type" value="Genomic_DNA"/>
</dbReference>
<dbReference type="RefSeq" id="WP_004572819.1">
    <property type="nucleotide sequence ID" value="NC_010577.1"/>
</dbReference>
<dbReference type="SMR" id="B2I583"/>
<dbReference type="GeneID" id="93904817"/>
<dbReference type="KEGG" id="xfn:XfasM23_1098"/>
<dbReference type="HOGENOM" id="CLU_006533_0_0_6"/>
<dbReference type="UniPathway" id="UPA00232"/>
<dbReference type="Proteomes" id="UP000001698">
    <property type="component" value="Chromosome"/>
</dbReference>
<dbReference type="GO" id="GO:0005886">
    <property type="term" value="C:plasma membrane"/>
    <property type="evidence" value="ECO:0007669"/>
    <property type="project" value="UniProtKB-SubCell"/>
</dbReference>
<dbReference type="GO" id="GO:0005524">
    <property type="term" value="F:ATP binding"/>
    <property type="evidence" value="ECO:0007669"/>
    <property type="project" value="UniProtKB-KW"/>
</dbReference>
<dbReference type="GO" id="GO:0004672">
    <property type="term" value="F:protein kinase activity"/>
    <property type="evidence" value="ECO:0007669"/>
    <property type="project" value="UniProtKB-UniRule"/>
</dbReference>
<dbReference type="GO" id="GO:0010795">
    <property type="term" value="P:regulation of ubiquinone biosynthetic process"/>
    <property type="evidence" value="ECO:0007669"/>
    <property type="project" value="UniProtKB-UniRule"/>
</dbReference>
<dbReference type="GO" id="GO:0006744">
    <property type="term" value="P:ubiquinone biosynthetic process"/>
    <property type="evidence" value="ECO:0007669"/>
    <property type="project" value="UniProtKB-UniPathway"/>
</dbReference>
<dbReference type="CDD" id="cd13972">
    <property type="entry name" value="UbiB"/>
    <property type="match status" value="1"/>
</dbReference>
<dbReference type="HAMAP" id="MF_00414">
    <property type="entry name" value="UbiB"/>
    <property type="match status" value="1"/>
</dbReference>
<dbReference type="InterPro" id="IPR004147">
    <property type="entry name" value="ABC1_dom"/>
</dbReference>
<dbReference type="InterPro" id="IPR011009">
    <property type="entry name" value="Kinase-like_dom_sf"/>
</dbReference>
<dbReference type="InterPro" id="IPR010232">
    <property type="entry name" value="UbiB"/>
</dbReference>
<dbReference type="InterPro" id="IPR045308">
    <property type="entry name" value="UbiB_bact"/>
</dbReference>
<dbReference type="InterPro" id="IPR050154">
    <property type="entry name" value="UbiB_kinase"/>
</dbReference>
<dbReference type="NCBIfam" id="NF003404">
    <property type="entry name" value="PRK04750.1"/>
    <property type="match status" value="1"/>
</dbReference>
<dbReference type="NCBIfam" id="TIGR01982">
    <property type="entry name" value="UbiB"/>
    <property type="match status" value="1"/>
</dbReference>
<dbReference type="PANTHER" id="PTHR10566">
    <property type="entry name" value="CHAPERONE-ACTIVITY OF BC1 COMPLEX CABC1 -RELATED"/>
    <property type="match status" value="1"/>
</dbReference>
<dbReference type="PANTHER" id="PTHR10566:SF113">
    <property type="entry name" value="PROTEIN ACTIVITY OF BC1 COMPLEX KINASE 7, CHLOROPLASTIC"/>
    <property type="match status" value="1"/>
</dbReference>
<dbReference type="Pfam" id="PF03109">
    <property type="entry name" value="ABC1"/>
    <property type="match status" value="1"/>
</dbReference>
<dbReference type="SUPFAM" id="SSF56112">
    <property type="entry name" value="Protein kinase-like (PK-like)"/>
    <property type="match status" value="1"/>
</dbReference>
<evidence type="ECO:0000255" key="1">
    <source>
        <dbReference type="HAMAP-Rule" id="MF_00414"/>
    </source>
</evidence>
<keyword id="KW-0067">ATP-binding</keyword>
<keyword id="KW-0997">Cell inner membrane</keyword>
<keyword id="KW-1003">Cell membrane</keyword>
<keyword id="KW-0418">Kinase</keyword>
<keyword id="KW-0472">Membrane</keyword>
<keyword id="KW-0547">Nucleotide-binding</keyword>
<keyword id="KW-0808">Transferase</keyword>
<keyword id="KW-0812">Transmembrane</keyword>
<keyword id="KW-1133">Transmembrane helix</keyword>
<keyword id="KW-0831">Ubiquinone biosynthesis</keyword>
<sequence length="552" mass="62681">MKALFRACRIGKVMLRYRLDTLLDGTAVERWLRLAKPFVPRISAEIVEQSRGRRLRLALQELGPIFVKFGQILSTRRDLVPQDIGDELVMLQDRVEPFEGQTARSIIETALGKSVESAFAHFDTVPLASASISQVHAATLHDRRAVVVKVLRPDIEHQISDDIALLKSLATLVEHTHPNADKIRPREIVAEIETTLAAELDLQREGANASVLRRFWEASDDIYVPEVIWSHTAERVLTLERMYGIPSDDIALLDASGIDRKALSSKGIRVFYTQVFRDNFFHADAHSGNIWVDSDPARKSNPRFIVLDFGIMGQLSQKDQYYLAENFMAIFHKDYRRIAELHVEAGWIPPHVRIEELEAAARSVCEPYFTRPLSQISLAEVMMKLFHVARRYQLTLQPQLILLQKTLLNIEGVGRQLDPELDIWVVARPVLERILRARYSPRHALKELNKRLPEIMTHAPDTPRLIHTWLVQQVESRKQNDVYLQQIRALAMTLQGLQRRVVNAIVGSGLLVAAAVLYGLHPDGLYLGTIPVWSLISGCIGALALFSAWWRS</sequence>
<comment type="function">
    <text evidence="1">Is probably a protein kinase regulator of UbiI activity which is involved in aerobic coenzyme Q (ubiquinone) biosynthesis.</text>
</comment>
<comment type="pathway">
    <text>Cofactor biosynthesis; ubiquinone biosynthesis [regulation].</text>
</comment>
<comment type="subcellular location">
    <subcellularLocation>
        <location evidence="1">Cell inner membrane</location>
        <topology evidence="1">Multi-pass membrane protein</topology>
    </subcellularLocation>
</comment>
<comment type="similarity">
    <text evidence="1">Belongs to the ABC1 family. UbiB subfamily.</text>
</comment>
<proteinExistence type="inferred from homology"/>
<feature type="chain" id="PRO_1000123933" description="Probable protein kinase UbiB">
    <location>
        <begin position="1"/>
        <end position="552"/>
    </location>
</feature>
<feature type="transmembrane region" description="Helical" evidence="1">
    <location>
        <begin position="501"/>
        <end position="521"/>
    </location>
</feature>
<feature type="transmembrane region" description="Helical" evidence="1">
    <location>
        <begin position="530"/>
        <end position="550"/>
    </location>
</feature>
<feature type="domain" description="Protein kinase" evidence="1">
    <location>
        <begin position="121"/>
        <end position="504"/>
    </location>
</feature>
<feature type="active site" description="Proton acceptor" evidence="1">
    <location>
        <position position="284"/>
    </location>
</feature>
<feature type="binding site" evidence="1">
    <location>
        <begin position="127"/>
        <end position="135"/>
    </location>
    <ligand>
        <name>ATP</name>
        <dbReference type="ChEBI" id="CHEBI:30616"/>
    </ligand>
</feature>
<feature type="binding site" evidence="1">
    <location>
        <position position="149"/>
    </location>
    <ligand>
        <name>ATP</name>
        <dbReference type="ChEBI" id="CHEBI:30616"/>
    </ligand>
</feature>
<gene>
    <name evidence="1" type="primary">ubiB</name>
    <name type="ordered locus">XfasM23_1098</name>
</gene>
<protein>
    <recommendedName>
        <fullName evidence="1">Probable protein kinase UbiB</fullName>
        <ecNumber evidence="1">2.7.-.-</ecNumber>
    </recommendedName>
    <alternativeName>
        <fullName evidence="1">Ubiquinone biosynthesis protein UbiB</fullName>
    </alternativeName>
</protein>